<feature type="chain" id="PRO_0000330539" description="Siroheme synthase">
    <location>
        <begin position="1"/>
        <end position="462"/>
    </location>
</feature>
<feature type="region of interest" description="Precorrin-2 dehydrogenase /sirohydrochlorin ferrochelatase" evidence="1">
    <location>
        <begin position="1"/>
        <end position="201"/>
    </location>
</feature>
<feature type="region of interest" description="Uroporphyrinogen-III C-methyltransferase" evidence="1">
    <location>
        <begin position="214"/>
        <end position="462"/>
    </location>
</feature>
<feature type="active site" description="Proton acceptor" evidence="1">
    <location>
        <position position="246"/>
    </location>
</feature>
<feature type="active site" description="Proton donor" evidence="1">
    <location>
        <position position="268"/>
    </location>
</feature>
<feature type="binding site" evidence="1">
    <location>
        <begin position="22"/>
        <end position="23"/>
    </location>
    <ligand>
        <name>NAD(+)</name>
        <dbReference type="ChEBI" id="CHEBI:57540"/>
    </ligand>
</feature>
<feature type="binding site" evidence="1">
    <location>
        <begin position="43"/>
        <end position="44"/>
    </location>
    <ligand>
        <name>NAD(+)</name>
        <dbReference type="ChEBI" id="CHEBI:57540"/>
    </ligand>
</feature>
<feature type="binding site" evidence="1">
    <location>
        <position position="223"/>
    </location>
    <ligand>
        <name>S-adenosyl-L-methionine</name>
        <dbReference type="ChEBI" id="CHEBI:59789"/>
    </ligand>
</feature>
<feature type="binding site" evidence="1">
    <location>
        <begin position="299"/>
        <end position="301"/>
    </location>
    <ligand>
        <name>S-adenosyl-L-methionine</name>
        <dbReference type="ChEBI" id="CHEBI:59789"/>
    </ligand>
</feature>
<feature type="binding site" evidence="1">
    <location>
        <position position="304"/>
    </location>
    <ligand>
        <name>S-adenosyl-L-methionine</name>
        <dbReference type="ChEBI" id="CHEBI:59789"/>
    </ligand>
</feature>
<feature type="binding site" evidence="1">
    <location>
        <begin position="329"/>
        <end position="330"/>
    </location>
    <ligand>
        <name>S-adenosyl-L-methionine</name>
        <dbReference type="ChEBI" id="CHEBI:59789"/>
    </ligand>
</feature>
<feature type="binding site" evidence="1">
    <location>
        <position position="381"/>
    </location>
    <ligand>
        <name>S-adenosyl-L-methionine</name>
        <dbReference type="ChEBI" id="CHEBI:59789"/>
    </ligand>
</feature>
<feature type="binding site" evidence="1">
    <location>
        <position position="410"/>
    </location>
    <ligand>
        <name>S-adenosyl-L-methionine</name>
        <dbReference type="ChEBI" id="CHEBI:59789"/>
    </ligand>
</feature>
<feature type="modified residue" description="Phosphoserine" evidence="1">
    <location>
        <position position="126"/>
    </location>
</feature>
<proteinExistence type="inferred from homology"/>
<dbReference type="EC" id="2.1.1.107" evidence="1"/>
<dbReference type="EC" id="1.3.1.76" evidence="1"/>
<dbReference type="EC" id="4.99.1.4" evidence="1"/>
<dbReference type="EMBL" id="CP000680">
    <property type="protein sequence ID" value="ABP85139.1"/>
    <property type="molecule type" value="Genomic_DNA"/>
</dbReference>
<dbReference type="SMR" id="A4XUX3"/>
<dbReference type="STRING" id="399739.Pmen_2383"/>
<dbReference type="KEGG" id="pmy:Pmen_2383"/>
<dbReference type="PATRIC" id="fig|399739.8.peg.2404"/>
<dbReference type="eggNOG" id="COG0007">
    <property type="taxonomic scope" value="Bacteria"/>
</dbReference>
<dbReference type="eggNOG" id="COG1648">
    <property type="taxonomic scope" value="Bacteria"/>
</dbReference>
<dbReference type="HOGENOM" id="CLU_011276_2_1_6"/>
<dbReference type="OrthoDB" id="9815856at2"/>
<dbReference type="UniPathway" id="UPA00148">
    <property type="reaction ID" value="UER00211"/>
</dbReference>
<dbReference type="UniPathway" id="UPA00148">
    <property type="reaction ID" value="UER00222"/>
</dbReference>
<dbReference type="UniPathway" id="UPA00262">
    <property type="reaction ID" value="UER00211"/>
</dbReference>
<dbReference type="UniPathway" id="UPA00262">
    <property type="reaction ID" value="UER00222"/>
</dbReference>
<dbReference type="UniPathway" id="UPA00262">
    <property type="reaction ID" value="UER00376"/>
</dbReference>
<dbReference type="GO" id="GO:0051287">
    <property type="term" value="F:NAD binding"/>
    <property type="evidence" value="ECO:0007669"/>
    <property type="project" value="InterPro"/>
</dbReference>
<dbReference type="GO" id="GO:0043115">
    <property type="term" value="F:precorrin-2 dehydrogenase activity"/>
    <property type="evidence" value="ECO:0007669"/>
    <property type="project" value="UniProtKB-UniRule"/>
</dbReference>
<dbReference type="GO" id="GO:0051266">
    <property type="term" value="F:sirohydrochlorin ferrochelatase activity"/>
    <property type="evidence" value="ECO:0007669"/>
    <property type="project" value="UniProtKB-EC"/>
</dbReference>
<dbReference type="GO" id="GO:0004851">
    <property type="term" value="F:uroporphyrin-III C-methyltransferase activity"/>
    <property type="evidence" value="ECO:0007669"/>
    <property type="project" value="UniProtKB-UniRule"/>
</dbReference>
<dbReference type="GO" id="GO:0009236">
    <property type="term" value="P:cobalamin biosynthetic process"/>
    <property type="evidence" value="ECO:0007669"/>
    <property type="project" value="UniProtKB-UniRule"/>
</dbReference>
<dbReference type="GO" id="GO:0032259">
    <property type="term" value="P:methylation"/>
    <property type="evidence" value="ECO:0007669"/>
    <property type="project" value="UniProtKB-KW"/>
</dbReference>
<dbReference type="GO" id="GO:0019354">
    <property type="term" value="P:siroheme biosynthetic process"/>
    <property type="evidence" value="ECO:0007669"/>
    <property type="project" value="UniProtKB-UniRule"/>
</dbReference>
<dbReference type="CDD" id="cd11642">
    <property type="entry name" value="SUMT"/>
    <property type="match status" value="1"/>
</dbReference>
<dbReference type="FunFam" id="3.30.160.110:FF:000001">
    <property type="entry name" value="Siroheme synthase"/>
    <property type="match status" value="1"/>
</dbReference>
<dbReference type="FunFam" id="3.30.950.10:FF:000001">
    <property type="entry name" value="Siroheme synthase"/>
    <property type="match status" value="1"/>
</dbReference>
<dbReference type="FunFam" id="3.40.1010.10:FF:000001">
    <property type="entry name" value="Siroheme synthase"/>
    <property type="match status" value="1"/>
</dbReference>
<dbReference type="Gene3D" id="3.40.1010.10">
    <property type="entry name" value="Cobalt-precorrin-4 Transmethylase, Domain 1"/>
    <property type="match status" value="1"/>
</dbReference>
<dbReference type="Gene3D" id="3.30.950.10">
    <property type="entry name" value="Methyltransferase, Cobalt-precorrin-4 Transmethylase, Domain 2"/>
    <property type="match status" value="1"/>
</dbReference>
<dbReference type="Gene3D" id="3.40.50.720">
    <property type="entry name" value="NAD(P)-binding Rossmann-like Domain"/>
    <property type="match status" value="1"/>
</dbReference>
<dbReference type="Gene3D" id="1.10.8.210">
    <property type="entry name" value="Sirohaem synthase, dimerisation domain"/>
    <property type="match status" value="1"/>
</dbReference>
<dbReference type="Gene3D" id="3.30.160.110">
    <property type="entry name" value="Siroheme synthase, domain 2"/>
    <property type="match status" value="1"/>
</dbReference>
<dbReference type="HAMAP" id="MF_01646">
    <property type="entry name" value="Siroheme_synth"/>
    <property type="match status" value="1"/>
</dbReference>
<dbReference type="InterPro" id="IPR000878">
    <property type="entry name" value="4pyrrol_Mease"/>
</dbReference>
<dbReference type="InterPro" id="IPR035996">
    <property type="entry name" value="4pyrrol_Methylase_sf"/>
</dbReference>
<dbReference type="InterPro" id="IPR014777">
    <property type="entry name" value="4pyrrole_Mease_sub1"/>
</dbReference>
<dbReference type="InterPro" id="IPR014776">
    <property type="entry name" value="4pyrrole_Mease_sub2"/>
</dbReference>
<dbReference type="InterPro" id="IPR006366">
    <property type="entry name" value="CobA/CysG_C"/>
</dbReference>
<dbReference type="InterPro" id="IPR036291">
    <property type="entry name" value="NAD(P)-bd_dom_sf"/>
</dbReference>
<dbReference type="InterPro" id="IPR050161">
    <property type="entry name" value="Siro_Cobalamin_biosynth"/>
</dbReference>
<dbReference type="InterPro" id="IPR037115">
    <property type="entry name" value="Sirohaem_synt_dimer_dom_sf"/>
</dbReference>
<dbReference type="InterPro" id="IPR012409">
    <property type="entry name" value="Sirohaem_synth"/>
</dbReference>
<dbReference type="InterPro" id="IPR028281">
    <property type="entry name" value="Sirohaem_synthase_central"/>
</dbReference>
<dbReference type="InterPro" id="IPR019478">
    <property type="entry name" value="Sirohaem_synthase_dimer_dom"/>
</dbReference>
<dbReference type="InterPro" id="IPR006367">
    <property type="entry name" value="Sirohaem_synthase_N"/>
</dbReference>
<dbReference type="InterPro" id="IPR003043">
    <property type="entry name" value="Uropor_MeTrfase_CS"/>
</dbReference>
<dbReference type="NCBIfam" id="TIGR01469">
    <property type="entry name" value="cobA_cysG_Cterm"/>
    <property type="match status" value="1"/>
</dbReference>
<dbReference type="NCBIfam" id="TIGR01470">
    <property type="entry name" value="cysG_Nterm"/>
    <property type="match status" value="1"/>
</dbReference>
<dbReference type="NCBIfam" id="NF004790">
    <property type="entry name" value="PRK06136.1"/>
    <property type="match status" value="1"/>
</dbReference>
<dbReference type="NCBIfam" id="NF007922">
    <property type="entry name" value="PRK10637.1"/>
    <property type="match status" value="1"/>
</dbReference>
<dbReference type="PANTHER" id="PTHR45790:SF1">
    <property type="entry name" value="SIROHEME SYNTHASE"/>
    <property type="match status" value="1"/>
</dbReference>
<dbReference type="PANTHER" id="PTHR45790">
    <property type="entry name" value="SIROHEME SYNTHASE-RELATED"/>
    <property type="match status" value="1"/>
</dbReference>
<dbReference type="Pfam" id="PF10414">
    <property type="entry name" value="CysG_dimeriser"/>
    <property type="match status" value="1"/>
</dbReference>
<dbReference type="Pfam" id="PF13241">
    <property type="entry name" value="NAD_binding_7"/>
    <property type="match status" value="1"/>
</dbReference>
<dbReference type="Pfam" id="PF14824">
    <property type="entry name" value="Sirohm_synth_M"/>
    <property type="match status" value="1"/>
</dbReference>
<dbReference type="Pfam" id="PF00590">
    <property type="entry name" value="TP_methylase"/>
    <property type="match status" value="1"/>
</dbReference>
<dbReference type="PIRSF" id="PIRSF036426">
    <property type="entry name" value="Sirohaem_synth"/>
    <property type="match status" value="1"/>
</dbReference>
<dbReference type="SUPFAM" id="SSF51735">
    <property type="entry name" value="NAD(P)-binding Rossmann-fold domains"/>
    <property type="match status" value="1"/>
</dbReference>
<dbReference type="SUPFAM" id="SSF75615">
    <property type="entry name" value="Siroheme synthase middle domains-like"/>
    <property type="match status" value="1"/>
</dbReference>
<dbReference type="SUPFAM" id="SSF53790">
    <property type="entry name" value="Tetrapyrrole methylase"/>
    <property type="match status" value="1"/>
</dbReference>
<dbReference type="PROSITE" id="PS00840">
    <property type="entry name" value="SUMT_2"/>
    <property type="match status" value="1"/>
</dbReference>
<comment type="function">
    <text evidence="1">Multifunctional enzyme that catalyzes the SAM-dependent methylations of uroporphyrinogen III at position C-2 and C-7 to form precorrin-2 via precorrin-1. Then it catalyzes the NAD-dependent ring dehydrogenation of precorrin-2 to yield sirohydrochlorin. Finally, it catalyzes the ferrochelation of sirohydrochlorin to yield siroheme.</text>
</comment>
<comment type="catalytic activity">
    <reaction evidence="1">
        <text>uroporphyrinogen III + 2 S-adenosyl-L-methionine = precorrin-2 + 2 S-adenosyl-L-homocysteine + H(+)</text>
        <dbReference type="Rhea" id="RHEA:32459"/>
        <dbReference type="ChEBI" id="CHEBI:15378"/>
        <dbReference type="ChEBI" id="CHEBI:57308"/>
        <dbReference type="ChEBI" id="CHEBI:57856"/>
        <dbReference type="ChEBI" id="CHEBI:58827"/>
        <dbReference type="ChEBI" id="CHEBI:59789"/>
        <dbReference type="EC" id="2.1.1.107"/>
    </reaction>
</comment>
<comment type="catalytic activity">
    <reaction evidence="1">
        <text>precorrin-2 + NAD(+) = sirohydrochlorin + NADH + 2 H(+)</text>
        <dbReference type="Rhea" id="RHEA:15613"/>
        <dbReference type="ChEBI" id="CHEBI:15378"/>
        <dbReference type="ChEBI" id="CHEBI:57540"/>
        <dbReference type="ChEBI" id="CHEBI:57945"/>
        <dbReference type="ChEBI" id="CHEBI:58351"/>
        <dbReference type="ChEBI" id="CHEBI:58827"/>
        <dbReference type="EC" id="1.3.1.76"/>
    </reaction>
</comment>
<comment type="catalytic activity">
    <reaction evidence="1">
        <text>siroheme + 2 H(+) = sirohydrochlorin + Fe(2+)</text>
        <dbReference type="Rhea" id="RHEA:24360"/>
        <dbReference type="ChEBI" id="CHEBI:15378"/>
        <dbReference type="ChEBI" id="CHEBI:29033"/>
        <dbReference type="ChEBI" id="CHEBI:58351"/>
        <dbReference type="ChEBI" id="CHEBI:60052"/>
        <dbReference type="EC" id="4.99.1.4"/>
    </reaction>
</comment>
<comment type="pathway">
    <text evidence="1">Cofactor biosynthesis; adenosylcobalamin biosynthesis; precorrin-2 from uroporphyrinogen III: step 1/1.</text>
</comment>
<comment type="pathway">
    <text evidence="1">Cofactor biosynthesis; adenosylcobalamin biosynthesis; sirohydrochlorin from precorrin-2: step 1/1.</text>
</comment>
<comment type="pathway">
    <text evidence="1">Porphyrin-containing compound metabolism; siroheme biosynthesis; precorrin-2 from uroporphyrinogen III: step 1/1.</text>
</comment>
<comment type="pathway">
    <text evidence="1">Porphyrin-containing compound metabolism; siroheme biosynthesis; siroheme from sirohydrochlorin: step 1/1.</text>
</comment>
<comment type="pathway">
    <text evidence="1">Porphyrin-containing compound metabolism; siroheme biosynthesis; sirohydrochlorin from precorrin-2: step 1/1.</text>
</comment>
<comment type="similarity">
    <text evidence="1">In the N-terminal section; belongs to the precorrin-2 dehydrogenase / sirohydrochlorin ferrochelatase family.</text>
</comment>
<comment type="similarity">
    <text evidence="1">In the C-terminal section; belongs to the precorrin methyltransferase family.</text>
</comment>
<sequence>MQFLPLFHKLQGRPVLVIGGGEVALRKARLLSDAGARLRVVAPEIRSELQELAGADGICLRGYASSDLQGVALVIAATDDEPLNARISAEAQAQGIPVNVVDAPALCSVIFPAIVDRSPLIVAVSSGGDAPVLARLIRAKIETWIPATYGQLANLGKRFRDRVKQLFPDVQQRRVFWEDVFQGQIAESVFAGKPEEGERLLEERLAGAAPRALGEVYLVGAGPGDPDLLTFRALRLMQQADVVLYDRLVAPAIIELCRRDAERIYVGKRRADHAVPQEQINQLLIDLARQGKRVLRLKGGDPFIFGRGGEEIEQLAAEDIPFQVVPGITAASGCAAYAGIPLTHRDHAQSVRFVTGHLKDGSSNLPWKDLVAPGQTLVFYMGLVGLYGICEQLIAHGRSAATPAALVQQGTTQNQRVFTGTLETLPQLVAQHEVHAPTLVIVGEVVTLRDKLAWFEGAQGSL</sequence>
<name>CYSG_ECTM1</name>
<gene>
    <name evidence="1" type="primary">cysG</name>
    <name type="ordered locus">Pmen_2383</name>
</gene>
<keyword id="KW-0169">Cobalamin biosynthesis</keyword>
<keyword id="KW-0456">Lyase</keyword>
<keyword id="KW-0489">Methyltransferase</keyword>
<keyword id="KW-0511">Multifunctional enzyme</keyword>
<keyword id="KW-0520">NAD</keyword>
<keyword id="KW-0560">Oxidoreductase</keyword>
<keyword id="KW-0597">Phosphoprotein</keyword>
<keyword id="KW-0627">Porphyrin biosynthesis</keyword>
<keyword id="KW-0949">S-adenosyl-L-methionine</keyword>
<keyword id="KW-0808">Transferase</keyword>
<organism>
    <name type="scientific">Ectopseudomonas mendocina (strain ymp)</name>
    <name type="common">Pseudomonas mendocina</name>
    <dbReference type="NCBI Taxonomy" id="399739"/>
    <lineage>
        <taxon>Bacteria</taxon>
        <taxon>Pseudomonadati</taxon>
        <taxon>Pseudomonadota</taxon>
        <taxon>Gammaproteobacteria</taxon>
        <taxon>Pseudomonadales</taxon>
        <taxon>Pseudomonadaceae</taxon>
        <taxon>Ectopseudomonas</taxon>
    </lineage>
</organism>
<reference key="1">
    <citation type="submission" date="2007-04" db="EMBL/GenBank/DDBJ databases">
        <title>Complete sequence of Pseudomonas mendocina ymp.</title>
        <authorList>
            <consortium name="US DOE Joint Genome Institute"/>
            <person name="Copeland A."/>
            <person name="Lucas S."/>
            <person name="Lapidus A."/>
            <person name="Barry K."/>
            <person name="Glavina del Rio T."/>
            <person name="Dalin E."/>
            <person name="Tice H."/>
            <person name="Pitluck S."/>
            <person name="Kiss H."/>
            <person name="Brettin T."/>
            <person name="Detter J.C."/>
            <person name="Bruce D."/>
            <person name="Han C."/>
            <person name="Schmutz J."/>
            <person name="Larimer F."/>
            <person name="Land M."/>
            <person name="Hauser L."/>
            <person name="Kyrpides N."/>
            <person name="Mikhailova N."/>
            <person name="Hersman L."/>
            <person name="Dubois J."/>
            <person name="Maurice P."/>
            <person name="Richardson P."/>
        </authorList>
    </citation>
    <scope>NUCLEOTIDE SEQUENCE [LARGE SCALE GENOMIC DNA]</scope>
    <source>
        <strain>ymp</strain>
    </source>
</reference>
<evidence type="ECO:0000255" key="1">
    <source>
        <dbReference type="HAMAP-Rule" id="MF_01646"/>
    </source>
</evidence>
<accession>A4XUX3</accession>
<protein>
    <recommendedName>
        <fullName evidence="1">Siroheme synthase</fullName>
    </recommendedName>
    <domain>
        <recommendedName>
            <fullName evidence="1">Uroporphyrinogen-III C-methyltransferase</fullName>
            <shortName evidence="1">Urogen III methylase</shortName>
            <ecNumber evidence="1">2.1.1.107</ecNumber>
        </recommendedName>
        <alternativeName>
            <fullName evidence="1">SUMT</fullName>
        </alternativeName>
        <alternativeName>
            <fullName evidence="1">Uroporphyrinogen III methylase</fullName>
            <shortName evidence="1">UROM</shortName>
        </alternativeName>
    </domain>
    <domain>
        <recommendedName>
            <fullName evidence="1">Precorrin-2 dehydrogenase</fullName>
            <ecNumber evidence="1">1.3.1.76</ecNumber>
        </recommendedName>
    </domain>
    <domain>
        <recommendedName>
            <fullName evidence="1">Sirohydrochlorin ferrochelatase</fullName>
            <ecNumber evidence="1">4.99.1.4</ecNumber>
        </recommendedName>
    </domain>
</protein>